<keyword id="KW-0067">ATP-binding</keyword>
<keyword id="KW-0963">Cytoplasm</keyword>
<keyword id="KW-0418">Kinase</keyword>
<keyword id="KW-0520">NAD</keyword>
<keyword id="KW-0521">NADP</keyword>
<keyword id="KW-0547">Nucleotide-binding</keyword>
<keyword id="KW-0808">Transferase</keyword>
<protein>
    <recommendedName>
        <fullName evidence="1">NAD kinase</fullName>
        <ecNumber evidence="1">2.7.1.23</ecNumber>
    </recommendedName>
    <alternativeName>
        <fullName evidence="1">ATP-dependent NAD kinase</fullName>
    </alternativeName>
</protein>
<organism>
    <name type="scientific">Staphylococcus aureus (strain USA300)</name>
    <dbReference type="NCBI Taxonomy" id="367830"/>
    <lineage>
        <taxon>Bacteria</taxon>
        <taxon>Bacillati</taxon>
        <taxon>Bacillota</taxon>
        <taxon>Bacilli</taxon>
        <taxon>Bacillales</taxon>
        <taxon>Staphylococcaceae</taxon>
        <taxon>Staphylococcus</taxon>
    </lineage>
</organism>
<dbReference type="EC" id="2.7.1.23" evidence="1"/>
<dbReference type="EMBL" id="CP000255">
    <property type="protein sequence ID" value="ABD21000.1"/>
    <property type="molecule type" value="Genomic_DNA"/>
</dbReference>
<dbReference type="RefSeq" id="WP_001270834.1">
    <property type="nucleotide sequence ID" value="NZ_CP027476.1"/>
</dbReference>
<dbReference type="SMR" id="Q2FI70"/>
<dbReference type="KEGG" id="saa:SAUSA300_0908"/>
<dbReference type="HOGENOM" id="CLU_008831_0_3_9"/>
<dbReference type="OMA" id="YRHTHFW"/>
<dbReference type="Proteomes" id="UP000001939">
    <property type="component" value="Chromosome"/>
</dbReference>
<dbReference type="GO" id="GO:0005737">
    <property type="term" value="C:cytoplasm"/>
    <property type="evidence" value="ECO:0007669"/>
    <property type="project" value="UniProtKB-SubCell"/>
</dbReference>
<dbReference type="GO" id="GO:0005524">
    <property type="term" value="F:ATP binding"/>
    <property type="evidence" value="ECO:0007669"/>
    <property type="project" value="UniProtKB-KW"/>
</dbReference>
<dbReference type="GO" id="GO:0046872">
    <property type="term" value="F:metal ion binding"/>
    <property type="evidence" value="ECO:0007669"/>
    <property type="project" value="UniProtKB-UniRule"/>
</dbReference>
<dbReference type="GO" id="GO:0051287">
    <property type="term" value="F:NAD binding"/>
    <property type="evidence" value="ECO:0007669"/>
    <property type="project" value="UniProtKB-ARBA"/>
</dbReference>
<dbReference type="GO" id="GO:0003951">
    <property type="term" value="F:NAD+ kinase activity"/>
    <property type="evidence" value="ECO:0007669"/>
    <property type="project" value="UniProtKB-UniRule"/>
</dbReference>
<dbReference type="GO" id="GO:0019674">
    <property type="term" value="P:NAD metabolic process"/>
    <property type="evidence" value="ECO:0007669"/>
    <property type="project" value="InterPro"/>
</dbReference>
<dbReference type="GO" id="GO:0006741">
    <property type="term" value="P:NADP biosynthetic process"/>
    <property type="evidence" value="ECO:0007669"/>
    <property type="project" value="UniProtKB-UniRule"/>
</dbReference>
<dbReference type="FunFam" id="2.60.200.30:FF:000002">
    <property type="entry name" value="NAD kinase"/>
    <property type="match status" value="1"/>
</dbReference>
<dbReference type="Gene3D" id="3.40.50.10330">
    <property type="entry name" value="Probable inorganic polyphosphate/atp-NAD kinase, domain 1"/>
    <property type="match status" value="1"/>
</dbReference>
<dbReference type="Gene3D" id="2.60.200.30">
    <property type="entry name" value="Probable inorganic polyphosphate/atp-NAD kinase, domain 2"/>
    <property type="match status" value="1"/>
</dbReference>
<dbReference type="HAMAP" id="MF_00361">
    <property type="entry name" value="NAD_kinase"/>
    <property type="match status" value="1"/>
</dbReference>
<dbReference type="InterPro" id="IPR017438">
    <property type="entry name" value="ATP-NAD_kinase_N"/>
</dbReference>
<dbReference type="InterPro" id="IPR017437">
    <property type="entry name" value="ATP-NAD_kinase_PpnK-typ_C"/>
</dbReference>
<dbReference type="InterPro" id="IPR016064">
    <property type="entry name" value="NAD/diacylglycerol_kinase_sf"/>
</dbReference>
<dbReference type="InterPro" id="IPR002504">
    <property type="entry name" value="NADK"/>
</dbReference>
<dbReference type="NCBIfam" id="NF003424">
    <property type="entry name" value="PRK04885.1"/>
    <property type="match status" value="1"/>
</dbReference>
<dbReference type="PANTHER" id="PTHR20275">
    <property type="entry name" value="NAD KINASE"/>
    <property type="match status" value="1"/>
</dbReference>
<dbReference type="PANTHER" id="PTHR20275:SF0">
    <property type="entry name" value="NAD KINASE"/>
    <property type="match status" value="1"/>
</dbReference>
<dbReference type="Pfam" id="PF01513">
    <property type="entry name" value="NAD_kinase"/>
    <property type="match status" value="1"/>
</dbReference>
<dbReference type="Pfam" id="PF20143">
    <property type="entry name" value="NAD_kinase_C"/>
    <property type="match status" value="1"/>
</dbReference>
<dbReference type="SUPFAM" id="SSF111331">
    <property type="entry name" value="NAD kinase/diacylglycerol kinase-like"/>
    <property type="match status" value="1"/>
</dbReference>
<feature type="chain" id="PRO_1000005445" description="NAD kinase">
    <location>
        <begin position="1"/>
        <end position="269"/>
    </location>
</feature>
<feature type="active site" description="Proton acceptor" evidence="1">
    <location>
        <position position="45"/>
    </location>
</feature>
<feature type="binding site" evidence="1">
    <location>
        <begin position="45"/>
        <end position="46"/>
    </location>
    <ligand>
        <name>NAD(+)</name>
        <dbReference type="ChEBI" id="CHEBI:57540"/>
    </ligand>
</feature>
<feature type="binding site" evidence="1">
    <location>
        <begin position="122"/>
        <end position="123"/>
    </location>
    <ligand>
        <name>NAD(+)</name>
        <dbReference type="ChEBI" id="CHEBI:57540"/>
    </ligand>
</feature>
<feature type="binding site" evidence="1">
    <location>
        <position position="149"/>
    </location>
    <ligand>
        <name>NAD(+)</name>
        <dbReference type="ChEBI" id="CHEBI:57540"/>
    </ligand>
</feature>
<feature type="binding site" evidence="1">
    <location>
        <position position="151"/>
    </location>
    <ligand>
        <name>NAD(+)</name>
        <dbReference type="ChEBI" id="CHEBI:57540"/>
    </ligand>
</feature>
<feature type="binding site" evidence="1">
    <location>
        <position position="186"/>
    </location>
    <ligand>
        <name>NAD(+)</name>
        <dbReference type="ChEBI" id="CHEBI:57540"/>
    </ligand>
</feature>
<accession>Q2FI70</accession>
<evidence type="ECO:0000255" key="1">
    <source>
        <dbReference type="HAMAP-Rule" id="MF_00361"/>
    </source>
</evidence>
<reference key="1">
    <citation type="journal article" date="2006" name="Lancet">
        <title>Complete genome sequence of USA300, an epidemic clone of community-acquired meticillin-resistant Staphylococcus aureus.</title>
        <authorList>
            <person name="Diep B.A."/>
            <person name="Gill S.R."/>
            <person name="Chang R.F."/>
            <person name="Phan T.H."/>
            <person name="Chen J.H."/>
            <person name="Davidson M.G."/>
            <person name="Lin F."/>
            <person name="Lin J."/>
            <person name="Carleton H.A."/>
            <person name="Mongodin E.F."/>
            <person name="Sensabaugh G.F."/>
            <person name="Perdreau-Remington F."/>
        </authorList>
    </citation>
    <scope>NUCLEOTIDE SEQUENCE [LARGE SCALE GENOMIC DNA]</scope>
    <source>
        <strain>USA300</strain>
    </source>
</reference>
<name>NADK_STAA3</name>
<comment type="function">
    <text evidence="1">Involved in the regulation of the intracellular balance of NAD and NADP, and is a key enzyme in the biosynthesis of NADP. Catalyzes specifically the phosphorylation on 2'-hydroxyl of the adenosine moiety of NAD to yield NADP.</text>
</comment>
<comment type="catalytic activity">
    <reaction evidence="1">
        <text>NAD(+) + ATP = ADP + NADP(+) + H(+)</text>
        <dbReference type="Rhea" id="RHEA:18629"/>
        <dbReference type="ChEBI" id="CHEBI:15378"/>
        <dbReference type="ChEBI" id="CHEBI:30616"/>
        <dbReference type="ChEBI" id="CHEBI:57540"/>
        <dbReference type="ChEBI" id="CHEBI:58349"/>
        <dbReference type="ChEBI" id="CHEBI:456216"/>
        <dbReference type="EC" id="2.7.1.23"/>
    </reaction>
</comment>
<comment type="cofactor">
    <cofactor evidence="1">
        <name>a divalent metal cation</name>
        <dbReference type="ChEBI" id="CHEBI:60240"/>
    </cofactor>
</comment>
<comment type="subcellular location">
    <subcellularLocation>
        <location evidence="1">Cytoplasm</location>
    </subcellularLocation>
</comment>
<comment type="similarity">
    <text evidence="1">Belongs to the NAD kinase family.</text>
</comment>
<gene>
    <name evidence="1" type="primary">nadK</name>
    <name type="ordered locus">SAUSA300_0908</name>
</gene>
<sequence length="269" mass="30769">MRYTILTKGDSKSNALKHKMMNYMKDFRMIEDSENPEIVISVGGDGTLLQAFHQYSHMLSKVAFVGVHTGHLGFYADWLPHEVEKLIIEINNSEFQVIEYPLLEIIMRYNDNGYETRYLALNEATMKTENGSTLVVDVNLRGKHFERFRGDGLCVSTPSGSTAYNKALGGALIHPSLEAMQITEIASINNRVFRTVGSPLVLPKHHTCLISPVNHDTIRMTIDHVSIKHKNVNSIQYRVANEKVRFARFRPFPFWKRVHDSFISSDEER</sequence>
<proteinExistence type="inferred from homology"/>